<gene>
    <name evidence="1" type="primary">rpoZ</name>
    <name type="ordered locus">Nmul_A0051</name>
</gene>
<name>RPOZ_NITMU</name>
<reference key="1">
    <citation type="submission" date="2005-08" db="EMBL/GenBank/DDBJ databases">
        <title>Complete sequence of chromosome 1 of Nitrosospira multiformis ATCC 25196.</title>
        <authorList>
            <person name="Copeland A."/>
            <person name="Lucas S."/>
            <person name="Lapidus A."/>
            <person name="Barry K."/>
            <person name="Detter J.C."/>
            <person name="Glavina T."/>
            <person name="Hammon N."/>
            <person name="Israni S."/>
            <person name="Pitluck S."/>
            <person name="Chain P."/>
            <person name="Malfatti S."/>
            <person name="Shin M."/>
            <person name="Vergez L."/>
            <person name="Schmutz J."/>
            <person name="Larimer F."/>
            <person name="Land M."/>
            <person name="Hauser L."/>
            <person name="Kyrpides N."/>
            <person name="Lykidis A."/>
            <person name="Richardson P."/>
        </authorList>
    </citation>
    <scope>NUCLEOTIDE SEQUENCE [LARGE SCALE GENOMIC DNA]</scope>
    <source>
        <strain>ATCC 25196 / NCIMB 11849 / C 71</strain>
    </source>
</reference>
<keyword id="KW-0240">DNA-directed RNA polymerase</keyword>
<keyword id="KW-0548">Nucleotidyltransferase</keyword>
<keyword id="KW-1185">Reference proteome</keyword>
<keyword id="KW-0804">Transcription</keyword>
<keyword id="KW-0808">Transferase</keyword>
<dbReference type="EC" id="2.7.7.6" evidence="1"/>
<dbReference type="EMBL" id="CP000103">
    <property type="protein sequence ID" value="ABB73360.1"/>
    <property type="molecule type" value="Genomic_DNA"/>
</dbReference>
<dbReference type="RefSeq" id="WP_011379415.1">
    <property type="nucleotide sequence ID" value="NC_007614.1"/>
</dbReference>
<dbReference type="SMR" id="Q2YD11"/>
<dbReference type="STRING" id="323848.Nmul_A0051"/>
<dbReference type="KEGG" id="nmu:Nmul_A0051"/>
<dbReference type="eggNOG" id="COG1758">
    <property type="taxonomic scope" value="Bacteria"/>
</dbReference>
<dbReference type="HOGENOM" id="CLU_125406_5_2_4"/>
<dbReference type="OrthoDB" id="9796300at2"/>
<dbReference type="Proteomes" id="UP000002718">
    <property type="component" value="Chromosome"/>
</dbReference>
<dbReference type="GO" id="GO:0000428">
    <property type="term" value="C:DNA-directed RNA polymerase complex"/>
    <property type="evidence" value="ECO:0007669"/>
    <property type="project" value="UniProtKB-KW"/>
</dbReference>
<dbReference type="GO" id="GO:0003677">
    <property type="term" value="F:DNA binding"/>
    <property type="evidence" value="ECO:0007669"/>
    <property type="project" value="UniProtKB-UniRule"/>
</dbReference>
<dbReference type="GO" id="GO:0003899">
    <property type="term" value="F:DNA-directed RNA polymerase activity"/>
    <property type="evidence" value="ECO:0007669"/>
    <property type="project" value="UniProtKB-UniRule"/>
</dbReference>
<dbReference type="GO" id="GO:0006351">
    <property type="term" value="P:DNA-templated transcription"/>
    <property type="evidence" value="ECO:0007669"/>
    <property type="project" value="UniProtKB-UniRule"/>
</dbReference>
<dbReference type="Gene3D" id="3.90.940.10">
    <property type="match status" value="1"/>
</dbReference>
<dbReference type="HAMAP" id="MF_00366">
    <property type="entry name" value="RNApol_bact_RpoZ"/>
    <property type="match status" value="1"/>
</dbReference>
<dbReference type="InterPro" id="IPR003716">
    <property type="entry name" value="DNA-dir_RNA_pol_omega"/>
</dbReference>
<dbReference type="InterPro" id="IPR006110">
    <property type="entry name" value="Pol_omega/Rpo6/RPB6"/>
</dbReference>
<dbReference type="InterPro" id="IPR036161">
    <property type="entry name" value="RPB6/omega-like_sf"/>
</dbReference>
<dbReference type="NCBIfam" id="TIGR00690">
    <property type="entry name" value="rpoZ"/>
    <property type="match status" value="1"/>
</dbReference>
<dbReference type="PANTHER" id="PTHR34476">
    <property type="entry name" value="DNA-DIRECTED RNA POLYMERASE SUBUNIT OMEGA"/>
    <property type="match status" value="1"/>
</dbReference>
<dbReference type="PANTHER" id="PTHR34476:SF1">
    <property type="entry name" value="DNA-DIRECTED RNA POLYMERASE SUBUNIT OMEGA"/>
    <property type="match status" value="1"/>
</dbReference>
<dbReference type="Pfam" id="PF01192">
    <property type="entry name" value="RNA_pol_Rpb6"/>
    <property type="match status" value="1"/>
</dbReference>
<dbReference type="SMART" id="SM01409">
    <property type="entry name" value="RNA_pol_Rpb6"/>
    <property type="match status" value="1"/>
</dbReference>
<dbReference type="SUPFAM" id="SSF63562">
    <property type="entry name" value="RPB6/omega subunit-like"/>
    <property type="match status" value="1"/>
</dbReference>
<accession>Q2YD11</accession>
<comment type="function">
    <text evidence="1">Promotes RNA polymerase assembly. Latches the N- and C-terminal regions of the beta' subunit thereby facilitating its interaction with the beta and alpha subunits.</text>
</comment>
<comment type="catalytic activity">
    <reaction evidence="1">
        <text>RNA(n) + a ribonucleoside 5'-triphosphate = RNA(n+1) + diphosphate</text>
        <dbReference type="Rhea" id="RHEA:21248"/>
        <dbReference type="Rhea" id="RHEA-COMP:14527"/>
        <dbReference type="Rhea" id="RHEA-COMP:17342"/>
        <dbReference type="ChEBI" id="CHEBI:33019"/>
        <dbReference type="ChEBI" id="CHEBI:61557"/>
        <dbReference type="ChEBI" id="CHEBI:140395"/>
        <dbReference type="EC" id="2.7.7.6"/>
    </reaction>
</comment>
<comment type="subunit">
    <text evidence="1">The RNAP catalytic core consists of 2 alpha, 1 beta, 1 beta' and 1 omega subunit. When a sigma factor is associated with the core the holoenzyme is formed, which can initiate transcription.</text>
</comment>
<comment type="similarity">
    <text evidence="1">Belongs to the RNA polymerase subunit omega family.</text>
</comment>
<feature type="chain" id="PRO_0000237480" description="DNA-directed RNA polymerase subunit omega">
    <location>
        <begin position="1"/>
        <end position="68"/>
    </location>
</feature>
<organism>
    <name type="scientific">Nitrosospira multiformis (strain ATCC 25196 / NCIMB 11849 / C 71)</name>
    <dbReference type="NCBI Taxonomy" id="323848"/>
    <lineage>
        <taxon>Bacteria</taxon>
        <taxon>Pseudomonadati</taxon>
        <taxon>Pseudomonadota</taxon>
        <taxon>Betaproteobacteria</taxon>
        <taxon>Nitrosomonadales</taxon>
        <taxon>Nitrosomonadaceae</taxon>
        <taxon>Nitrosospira</taxon>
    </lineage>
</organism>
<evidence type="ECO:0000255" key="1">
    <source>
        <dbReference type="HAMAP-Rule" id="MF_00366"/>
    </source>
</evidence>
<proteinExistence type="inferred from homology"/>
<protein>
    <recommendedName>
        <fullName evidence="1">DNA-directed RNA polymerase subunit omega</fullName>
        <shortName evidence="1">RNAP omega subunit</shortName>
        <ecNumber evidence="1">2.7.7.6</ecNumber>
    </recommendedName>
    <alternativeName>
        <fullName evidence="1">RNA polymerase omega subunit</fullName>
    </alternativeName>
    <alternativeName>
        <fullName evidence="1">Transcriptase subunit omega</fullName>
    </alternativeName>
</protein>
<sequence length="68" mass="7349">MARITVDDCLKKIPNRFDMTLVATIRARQLSVGGSPMVEPARDKPTVIALREISQGLVGTDILTTGPI</sequence>